<proteinExistence type="evidence at protein level"/>
<dbReference type="EMBL" id="AK014456">
    <property type="protein sequence ID" value="BAB29363.1"/>
    <property type="molecule type" value="mRNA"/>
</dbReference>
<dbReference type="EMBL" id="AK150349">
    <property type="protein sequence ID" value="BAE29486.1"/>
    <property type="molecule type" value="mRNA"/>
</dbReference>
<dbReference type="EMBL" id="AK152887">
    <property type="protein sequence ID" value="BAE31570.1"/>
    <property type="molecule type" value="mRNA"/>
</dbReference>
<dbReference type="EMBL" id="AK159476">
    <property type="protein sequence ID" value="BAE35114.1"/>
    <property type="molecule type" value="mRNA"/>
</dbReference>
<dbReference type="EMBL" id="BC006893">
    <property type="protein sequence ID" value="AAH06893.1"/>
    <property type="molecule type" value="mRNA"/>
</dbReference>
<dbReference type="CCDS" id="CCDS27930.1"/>
<dbReference type="RefSeq" id="NP_082996.2">
    <property type="nucleotide sequence ID" value="NM_028720.2"/>
</dbReference>
<dbReference type="SMR" id="Q922P9"/>
<dbReference type="BioGRID" id="216431">
    <property type="interactions" value="9"/>
</dbReference>
<dbReference type="FunCoup" id="Q922P9">
    <property type="interactions" value="4483"/>
</dbReference>
<dbReference type="IntAct" id="Q922P9">
    <property type="interactions" value="3"/>
</dbReference>
<dbReference type="MINT" id="Q922P9"/>
<dbReference type="STRING" id="10090.ENSMUSP00000111510"/>
<dbReference type="GlyGen" id="Q922P9">
    <property type="glycosylation" value="2 sites, 1 N-linked glycan (1 site), 1 O-linked glycan (1 site)"/>
</dbReference>
<dbReference type="iPTMnet" id="Q922P9"/>
<dbReference type="PhosphoSitePlus" id="Q922P9"/>
<dbReference type="jPOST" id="Q922P9"/>
<dbReference type="PaxDb" id="10090-ENSMUSP00000111510"/>
<dbReference type="PeptideAtlas" id="Q922P9"/>
<dbReference type="ProteomicsDB" id="263378"/>
<dbReference type="Pumba" id="Q922P9"/>
<dbReference type="Antibodypedia" id="24437">
    <property type="antibodies" value="110 antibodies from 22 providers"/>
</dbReference>
<dbReference type="Ensembl" id="ENSMUST00000023189.15">
    <property type="protein sequence ID" value="ENSMUSP00000023189.8"/>
    <property type="gene ID" value="ENSMUSG00000022536.15"/>
</dbReference>
<dbReference type="GeneID" id="74022"/>
<dbReference type="KEGG" id="mmu:74022"/>
<dbReference type="UCSC" id="uc007ybm.1">
    <property type="organism name" value="mouse"/>
</dbReference>
<dbReference type="AGR" id="MGI:1921272"/>
<dbReference type="CTD" id="84656"/>
<dbReference type="MGI" id="MGI:1921272">
    <property type="gene designation" value="Glyr1"/>
</dbReference>
<dbReference type="VEuPathDB" id="HostDB:ENSMUSG00000022536"/>
<dbReference type="eggNOG" id="KOG0409">
    <property type="taxonomic scope" value="Eukaryota"/>
</dbReference>
<dbReference type="eggNOG" id="KOG1904">
    <property type="taxonomic scope" value="Eukaryota"/>
</dbReference>
<dbReference type="GeneTree" id="ENSGT00940000156435"/>
<dbReference type="InParanoid" id="Q922P9"/>
<dbReference type="OrthoDB" id="21615at2759"/>
<dbReference type="BioGRID-ORCS" id="74022">
    <property type="hits" value="9 hits in 81 CRISPR screens"/>
</dbReference>
<dbReference type="ChiTaRS" id="Glyr1">
    <property type="organism name" value="mouse"/>
</dbReference>
<dbReference type="PRO" id="PR:Q922P9"/>
<dbReference type="Proteomes" id="UP000000589">
    <property type="component" value="Chromosome 16"/>
</dbReference>
<dbReference type="RNAct" id="Q922P9">
    <property type="molecule type" value="protein"/>
</dbReference>
<dbReference type="Bgee" id="ENSMUSG00000022536">
    <property type="expression patterns" value="Expressed in ear vesicle and 258 other cell types or tissues"/>
</dbReference>
<dbReference type="ExpressionAtlas" id="Q922P9">
    <property type="expression patterns" value="baseline and differential"/>
</dbReference>
<dbReference type="GO" id="GO:0000786">
    <property type="term" value="C:nucleosome"/>
    <property type="evidence" value="ECO:0000250"/>
    <property type="project" value="UniProtKB"/>
</dbReference>
<dbReference type="GO" id="GO:0005634">
    <property type="term" value="C:nucleus"/>
    <property type="evidence" value="ECO:0007669"/>
    <property type="project" value="UniProtKB-SubCell"/>
</dbReference>
<dbReference type="GO" id="GO:0003682">
    <property type="term" value="F:chromatin binding"/>
    <property type="evidence" value="ECO:0000314"/>
    <property type="project" value="UniProtKB"/>
</dbReference>
<dbReference type="GO" id="GO:0003677">
    <property type="term" value="F:DNA binding"/>
    <property type="evidence" value="ECO:0000314"/>
    <property type="project" value="UniProtKB"/>
</dbReference>
<dbReference type="GO" id="GO:0042393">
    <property type="term" value="F:histone binding"/>
    <property type="evidence" value="ECO:0000250"/>
    <property type="project" value="UniProtKB"/>
</dbReference>
<dbReference type="GO" id="GO:0051287">
    <property type="term" value="F:NAD binding"/>
    <property type="evidence" value="ECO:0007669"/>
    <property type="project" value="InterPro"/>
</dbReference>
<dbReference type="GO" id="GO:0050661">
    <property type="term" value="F:NADP binding"/>
    <property type="evidence" value="ECO:0007669"/>
    <property type="project" value="InterPro"/>
</dbReference>
<dbReference type="CDD" id="cd05836">
    <property type="entry name" value="PWWP_GLYR1"/>
    <property type="match status" value="1"/>
</dbReference>
<dbReference type="FunFam" id="3.40.50.720:FF:000058">
    <property type="entry name" value="Putative oxidoreductase GLYR1 homolog"/>
    <property type="match status" value="1"/>
</dbReference>
<dbReference type="FunFam" id="1.10.1040.10:FF:000011">
    <property type="entry name" value="putative oxidoreductase GLYR1 isoform X1"/>
    <property type="match status" value="1"/>
</dbReference>
<dbReference type="FunFam" id="2.30.30.140:FF:000027">
    <property type="entry name" value="putative oxidoreductase GLYR1 isoform X1"/>
    <property type="match status" value="1"/>
</dbReference>
<dbReference type="Gene3D" id="2.30.30.140">
    <property type="match status" value="1"/>
</dbReference>
<dbReference type="Gene3D" id="1.10.1040.10">
    <property type="entry name" value="N-(1-d-carboxylethyl)-l-norvaline Dehydrogenase, domain 2"/>
    <property type="match status" value="1"/>
</dbReference>
<dbReference type="Gene3D" id="3.40.50.720">
    <property type="entry name" value="NAD(P)-binding Rossmann-like Domain"/>
    <property type="match status" value="1"/>
</dbReference>
<dbReference type="InterPro" id="IPR008927">
    <property type="entry name" value="6-PGluconate_DH-like_C_sf"/>
</dbReference>
<dbReference type="InterPro" id="IPR013328">
    <property type="entry name" value="6PGD_dom2"/>
</dbReference>
<dbReference type="InterPro" id="IPR006115">
    <property type="entry name" value="6PGDH_NADP-bd"/>
</dbReference>
<dbReference type="InterPro" id="IPR035501">
    <property type="entry name" value="GLYR1_PWWP"/>
</dbReference>
<dbReference type="InterPro" id="IPR029154">
    <property type="entry name" value="HIBADH-like_NADP-bd"/>
</dbReference>
<dbReference type="InterPro" id="IPR051265">
    <property type="entry name" value="HIBADH-related_NP60_sf"/>
</dbReference>
<dbReference type="InterPro" id="IPR036291">
    <property type="entry name" value="NAD(P)-bd_dom_sf"/>
</dbReference>
<dbReference type="InterPro" id="IPR000313">
    <property type="entry name" value="PWWP_dom"/>
</dbReference>
<dbReference type="PANTHER" id="PTHR43580:SF2">
    <property type="entry name" value="CYTOKINE-LIKE NUCLEAR FACTOR N-PAC"/>
    <property type="match status" value="1"/>
</dbReference>
<dbReference type="PANTHER" id="PTHR43580">
    <property type="entry name" value="OXIDOREDUCTASE GLYR1-RELATED"/>
    <property type="match status" value="1"/>
</dbReference>
<dbReference type="Pfam" id="PF14833">
    <property type="entry name" value="NAD_binding_11"/>
    <property type="match status" value="1"/>
</dbReference>
<dbReference type="Pfam" id="PF03446">
    <property type="entry name" value="NAD_binding_2"/>
    <property type="match status" value="1"/>
</dbReference>
<dbReference type="Pfam" id="PF00855">
    <property type="entry name" value="PWWP"/>
    <property type="match status" value="1"/>
</dbReference>
<dbReference type="SMART" id="SM00293">
    <property type="entry name" value="PWWP"/>
    <property type="match status" value="1"/>
</dbReference>
<dbReference type="SUPFAM" id="SSF48179">
    <property type="entry name" value="6-phosphogluconate dehydrogenase C-terminal domain-like"/>
    <property type="match status" value="1"/>
</dbReference>
<dbReference type="SUPFAM" id="SSF51735">
    <property type="entry name" value="NAD(P)-binding Rossmann-fold domains"/>
    <property type="match status" value="1"/>
</dbReference>
<dbReference type="SUPFAM" id="SSF63748">
    <property type="entry name" value="Tudor/PWWP/MBT"/>
    <property type="match status" value="1"/>
</dbReference>
<dbReference type="PROSITE" id="PS50812">
    <property type="entry name" value="PWWP"/>
    <property type="match status" value="1"/>
</dbReference>
<name>GLYR1_MOUSE</name>
<organism>
    <name type="scientific">Mus musculus</name>
    <name type="common">Mouse</name>
    <dbReference type="NCBI Taxonomy" id="10090"/>
    <lineage>
        <taxon>Eukaryota</taxon>
        <taxon>Metazoa</taxon>
        <taxon>Chordata</taxon>
        <taxon>Craniata</taxon>
        <taxon>Vertebrata</taxon>
        <taxon>Euteleostomi</taxon>
        <taxon>Mammalia</taxon>
        <taxon>Eutheria</taxon>
        <taxon>Euarchontoglires</taxon>
        <taxon>Glires</taxon>
        <taxon>Rodentia</taxon>
        <taxon>Myomorpha</taxon>
        <taxon>Muroidea</taxon>
        <taxon>Muridae</taxon>
        <taxon>Murinae</taxon>
        <taxon>Mus</taxon>
        <taxon>Mus</taxon>
    </lineage>
</organism>
<feature type="chain" id="PRO_0000312122" description="Cytokine-like nuclear factor N-PAC">
    <location>
        <begin position="1"/>
        <end position="546"/>
    </location>
</feature>
<feature type="domain" description="PWWP" evidence="2">
    <location>
        <begin position="8"/>
        <end position="66"/>
    </location>
</feature>
<feature type="DNA-binding region" description="A.T hook" evidence="6">
    <location>
        <begin position="167"/>
        <end position="179"/>
    </location>
</feature>
<feature type="region of interest" description="Disordered" evidence="3">
    <location>
        <begin position="91"/>
        <end position="187"/>
    </location>
</feature>
<feature type="region of interest" description="Interaction with histone H3" evidence="1">
    <location>
        <begin position="213"/>
        <end position="216"/>
    </location>
</feature>
<feature type="region of interest" description="Interaction with KDM1B" evidence="1">
    <location>
        <begin position="215"/>
        <end position="224"/>
    </location>
</feature>
<feature type="region of interest" description="Dehydrogenase domain" evidence="1">
    <location>
        <begin position="260"/>
        <end position="546"/>
    </location>
</feature>
<feature type="compositionally biased region" description="Basic and acidic residues" evidence="3">
    <location>
        <begin position="91"/>
        <end position="145"/>
    </location>
</feature>
<feature type="compositionally biased region" description="Basic and acidic residues" evidence="3">
    <location>
        <begin position="161"/>
        <end position="181"/>
    </location>
</feature>
<feature type="binding site" evidence="1">
    <location>
        <begin position="270"/>
        <end position="284"/>
    </location>
    <ligand>
        <name>NAD(+)</name>
        <dbReference type="ChEBI" id="CHEBI:57540"/>
    </ligand>
</feature>
<feature type="binding site" evidence="1">
    <location>
        <position position="355"/>
    </location>
    <ligand>
        <name>NAD(+)</name>
        <dbReference type="ChEBI" id="CHEBI:57540"/>
    </ligand>
</feature>
<feature type="binding site" evidence="1">
    <location>
        <position position="498"/>
    </location>
    <ligand>
        <name>NAD(+)</name>
        <dbReference type="ChEBI" id="CHEBI:57540"/>
    </ligand>
</feature>
<feature type="site" description="Required to promote KDM1B demethylase activity toward histone H3K4me1 and H3K4me2" evidence="1">
    <location>
        <position position="216"/>
    </location>
</feature>
<feature type="modified residue" description="Phosphoserine" evidence="1">
    <location>
        <position position="130"/>
    </location>
</feature>
<feature type="modified residue" description="Phosphoserine" evidence="1">
    <location>
        <position position="166"/>
    </location>
</feature>
<feature type="modified residue" description="Phosphoserine" evidence="1">
    <location>
        <position position="533"/>
    </location>
</feature>
<feature type="cross-link" description="Glycyl lysine isopeptide (Lys-Gly) (interchain with G-Cter in SUMO2)" evidence="1">
    <location>
        <position position="135"/>
    </location>
</feature>
<feature type="cross-link" description="Glycyl lysine isopeptide (Lys-Gly) (interchain with G-Cter in SUMO2)" evidence="1">
    <location>
        <position position="175"/>
    </location>
</feature>
<feature type="cross-link" description="Glycyl lysine isopeptide (Lys-Gly) (interchain with G-Cter in SUMO2)" evidence="1">
    <location>
        <position position="178"/>
    </location>
</feature>
<feature type="cross-link" description="Glycyl lysine isopeptide (Lys-Gly) (interchain with G-Cter in SUMO2)" evidence="1">
    <location>
        <position position="200"/>
    </location>
</feature>
<feature type="cross-link" description="Glycyl lysine isopeptide (Lys-Gly) (interchain with G-Cter in SUMO2)" evidence="1">
    <location>
        <position position="210"/>
    </location>
</feature>
<feature type="cross-link" description="Glycyl lysine isopeptide (Lys-Gly) (interchain with G-Cter in SUMO2)" evidence="1">
    <location>
        <position position="226"/>
    </location>
</feature>
<feature type="cross-link" description="Glycyl lysine isopeptide (Lys-Gly) (interchain with G-Cter in SUMO2)" evidence="1">
    <location>
        <position position="236"/>
    </location>
</feature>
<feature type="cross-link" description="Glycyl lysine isopeptide (Lys-Gly) (interchain with G-Cter in SUMO2)" evidence="1">
    <location>
        <position position="239"/>
    </location>
</feature>
<feature type="cross-link" description="Glycyl lysine isopeptide (Lys-Gly) (interchain with G-Cter in SUMO2)" evidence="1">
    <location>
        <position position="268"/>
    </location>
</feature>
<feature type="cross-link" description="Glycyl lysine isopeptide (Lys-Gly) (interchain with G-Cter in SUMO2)" evidence="1">
    <location>
        <position position="301"/>
    </location>
</feature>
<feature type="mutagenesis site" description="Mutant animals are born at expected Mendelian ratios. 54% mutants display postnatal lethality between days 0 and 1. They show centricular septal defects." evidence="5">
    <original>P</original>
    <variation>L</variation>
    <location>
        <position position="489"/>
    </location>
</feature>
<feature type="sequence conflict" description="In Ref. 1; BAB29363." evidence="6" ref="1">
    <original>ED</original>
    <variation>KN</variation>
    <location>
        <begin position="50"/>
        <end position="51"/>
    </location>
</feature>
<feature type="sequence conflict" description="In Ref. 1; BAB29363." evidence="6" ref="1">
    <original>NR</original>
    <variation>DW</variation>
    <location>
        <begin position="109"/>
        <end position="110"/>
    </location>
</feature>
<feature type="sequence conflict" description="In Ref. 1; BAE35114." evidence="6" ref="1">
    <original>N</original>
    <variation>S</variation>
    <location>
        <position position="296"/>
    </location>
</feature>
<feature type="sequence conflict" description="In Ref. 1; BAE35114." evidence="6" ref="1">
    <original>N</original>
    <variation>S</variation>
    <location>
        <position position="535"/>
    </location>
</feature>
<gene>
    <name evidence="7" type="primary">Glyr1</name>
    <name type="synonym">Np60</name>
</gene>
<protein>
    <recommendedName>
        <fullName>Cytokine-like nuclear factor N-PAC</fullName>
        <shortName>NPAC</shortName>
    </recommendedName>
    <alternativeName>
        <fullName>Glyoxylate reductase 1 homolog</fullName>
    </alternativeName>
    <alternativeName>
        <fullName>Nuclear protein NP60</fullName>
    </alternativeName>
    <alternativeName>
        <fullName>Putative oxidoreductase GLYR1</fullName>
    </alternativeName>
</protein>
<accession>Q922P9</accession>
<accession>Q3TX02</accession>
<accession>Q9CYQ1</accession>
<sequence>MAAVSLRLGDLVWGKLGRYPPWPGKIVNPPKDLKKPRGKKCFFVKFFGTEDHAWIKVEQLKPYHAHKEEMIKINKGKRFQQAVDAVEEFLRRAKGKDQTSSHTSADDKNRRNSSEERSRPNSGDEKRKLSLSEGKVKKNMGEGKKRVTSGSADRGSKCLKRAQEQSPRKRGRPPKDEKDLTIPESSTVKGMMAGPMAAFKWQPTATEPVKDADPHFHHFLLSQTEKPAVCYQAITKKLKICEEETGSTSIQAADSTAVNGSITPTDKKIGFLGLGLMGSGIVSNLLKMGHTVTVWNRTAEKEGARLGRTPAEVVSTCDITFACVSDPKAAKDLVLGPSGVLQGIRPGKCYVDMSTVDADTVTELAQVIVSRGGRFLEAPVSGNQQLSNDGMLVILAAGDRGLYEDCSSCFQAMGKTSFFLGEVGNAAKMMLIVNMVQGSFMATIAEGLTLAQVTGQSQQTLLDILNQGQLASIFLDQKCQNILQGNFKPDFYLKYIQKDLRLAIALGDAVNHPTPMAAAANEVYKRAKALDQSDNDMSAVYRAYIH</sequence>
<evidence type="ECO:0000250" key="1">
    <source>
        <dbReference type="UniProtKB" id="Q49A26"/>
    </source>
</evidence>
<evidence type="ECO:0000255" key="2">
    <source>
        <dbReference type="PROSITE-ProRule" id="PRU00162"/>
    </source>
</evidence>
<evidence type="ECO:0000256" key="3">
    <source>
        <dbReference type="SAM" id="MobiDB-lite"/>
    </source>
</evidence>
<evidence type="ECO:0000269" key="4">
    <source>
    </source>
</evidence>
<evidence type="ECO:0000269" key="5">
    <source>
    </source>
</evidence>
<evidence type="ECO:0000305" key="6"/>
<evidence type="ECO:0000312" key="7">
    <source>
        <dbReference type="MGI" id="MGI:1921272"/>
    </source>
</evidence>
<reference key="1">
    <citation type="journal article" date="2005" name="Science">
        <title>The transcriptional landscape of the mammalian genome.</title>
        <authorList>
            <person name="Carninci P."/>
            <person name="Kasukawa T."/>
            <person name="Katayama S."/>
            <person name="Gough J."/>
            <person name="Frith M.C."/>
            <person name="Maeda N."/>
            <person name="Oyama R."/>
            <person name="Ravasi T."/>
            <person name="Lenhard B."/>
            <person name="Wells C."/>
            <person name="Kodzius R."/>
            <person name="Shimokawa K."/>
            <person name="Bajic V.B."/>
            <person name="Brenner S.E."/>
            <person name="Batalov S."/>
            <person name="Forrest A.R."/>
            <person name="Zavolan M."/>
            <person name="Davis M.J."/>
            <person name="Wilming L.G."/>
            <person name="Aidinis V."/>
            <person name="Allen J.E."/>
            <person name="Ambesi-Impiombato A."/>
            <person name="Apweiler R."/>
            <person name="Aturaliya R.N."/>
            <person name="Bailey T.L."/>
            <person name="Bansal M."/>
            <person name="Baxter L."/>
            <person name="Beisel K.W."/>
            <person name="Bersano T."/>
            <person name="Bono H."/>
            <person name="Chalk A.M."/>
            <person name="Chiu K.P."/>
            <person name="Choudhary V."/>
            <person name="Christoffels A."/>
            <person name="Clutterbuck D.R."/>
            <person name="Crowe M.L."/>
            <person name="Dalla E."/>
            <person name="Dalrymple B.P."/>
            <person name="de Bono B."/>
            <person name="Della Gatta G."/>
            <person name="di Bernardo D."/>
            <person name="Down T."/>
            <person name="Engstrom P."/>
            <person name="Fagiolini M."/>
            <person name="Faulkner G."/>
            <person name="Fletcher C.F."/>
            <person name="Fukushima T."/>
            <person name="Furuno M."/>
            <person name="Futaki S."/>
            <person name="Gariboldi M."/>
            <person name="Georgii-Hemming P."/>
            <person name="Gingeras T.R."/>
            <person name="Gojobori T."/>
            <person name="Green R.E."/>
            <person name="Gustincich S."/>
            <person name="Harbers M."/>
            <person name="Hayashi Y."/>
            <person name="Hensch T.K."/>
            <person name="Hirokawa N."/>
            <person name="Hill D."/>
            <person name="Huminiecki L."/>
            <person name="Iacono M."/>
            <person name="Ikeo K."/>
            <person name="Iwama A."/>
            <person name="Ishikawa T."/>
            <person name="Jakt M."/>
            <person name="Kanapin A."/>
            <person name="Katoh M."/>
            <person name="Kawasawa Y."/>
            <person name="Kelso J."/>
            <person name="Kitamura H."/>
            <person name="Kitano H."/>
            <person name="Kollias G."/>
            <person name="Krishnan S.P."/>
            <person name="Kruger A."/>
            <person name="Kummerfeld S.K."/>
            <person name="Kurochkin I.V."/>
            <person name="Lareau L.F."/>
            <person name="Lazarevic D."/>
            <person name="Lipovich L."/>
            <person name="Liu J."/>
            <person name="Liuni S."/>
            <person name="McWilliam S."/>
            <person name="Madan Babu M."/>
            <person name="Madera M."/>
            <person name="Marchionni L."/>
            <person name="Matsuda H."/>
            <person name="Matsuzawa S."/>
            <person name="Miki H."/>
            <person name="Mignone F."/>
            <person name="Miyake S."/>
            <person name="Morris K."/>
            <person name="Mottagui-Tabar S."/>
            <person name="Mulder N."/>
            <person name="Nakano N."/>
            <person name="Nakauchi H."/>
            <person name="Ng P."/>
            <person name="Nilsson R."/>
            <person name="Nishiguchi S."/>
            <person name="Nishikawa S."/>
            <person name="Nori F."/>
            <person name="Ohara O."/>
            <person name="Okazaki Y."/>
            <person name="Orlando V."/>
            <person name="Pang K.C."/>
            <person name="Pavan W.J."/>
            <person name="Pavesi G."/>
            <person name="Pesole G."/>
            <person name="Petrovsky N."/>
            <person name="Piazza S."/>
            <person name="Reed J."/>
            <person name="Reid J.F."/>
            <person name="Ring B.Z."/>
            <person name="Ringwald M."/>
            <person name="Rost B."/>
            <person name="Ruan Y."/>
            <person name="Salzberg S.L."/>
            <person name="Sandelin A."/>
            <person name="Schneider C."/>
            <person name="Schoenbach C."/>
            <person name="Sekiguchi K."/>
            <person name="Semple C.A."/>
            <person name="Seno S."/>
            <person name="Sessa L."/>
            <person name="Sheng Y."/>
            <person name="Shibata Y."/>
            <person name="Shimada H."/>
            <person name="Shimada K."/>
            <person name="Silva D."/>
            <person name="Sinclair B."/>
            <person name="Sperling S."/>
            <person name="Stupka E."/>
            <person name="Sugiura K."/>
            <person name="Sultana R."/>
            <person name="Takenaka Y."/>
            <person name="Taki K."/>
            <person name="Tammoja K."/>
            <person name="Tan S.L."/>
            <person name="Tang S."/>
            <person name="Taylor M.S."/>
            <person name="Tegner J."/>
            <person name="Teichmann S.A."/>
            <person name="Ueda H.R."/>
            <person name="van Nimwegen E."/>
            <person name="Verardo R."/>
            <person name="Wei C.L."/>
            <person name="Yagi K."/>
            <person name="Yamanishi H."/>
            <person name="Zabarovsky E."/>
            <person name="Zhu S."/>
            <person name="Zimmer A."/>
            <person name="Hide W."/>
            <person name="Bult C."/>
            <person name="Grimmond S.M."/>
            <person name="Teasdale R.D."/>
            <person name="Liu E.T."/>
            <person name="Brusic V."/>
            <person name="Quackenbush J."/>
            <person name="Wahlestedt C."/>
            <person name="Mattick J.S."/>
            <person name="Hume D.A."/>
            <person name="Kai C."/>
            <person name="Sasaki D."/>
            <person name="Tomaru Y."/>
            <person name="Fukuda S."/>
            <person name="Kanamori-Katayama M."/>
            <person name="Suzuki M."/>
            <person name="Aoki J."/>
            <person name="Arakawa T."/>
            <person name="Iida J."/>
            <person name="Imamura K."/>
            <person name="Itoh M."/>
            <person name="Kato T."/>
            <person name="Kawaji H."/>
            <person name="Kawagashira N."/>
            <person name="Kawashima T."/>
            <person name="Kojima M."/>
            <person name="Kondo S."/>
            <person name="Konno H."/>
            <person name="Nakano K."/>
            <person name="Ninomiya N."/>
            <person name="Nishio T."/>
            <person name="Okada M."/>
            <person name="Plessy C."/>
            <person name="Shibata K."/>
            <person name="Shiraki T."/>
            <person name="Suzuki S."/>
            <person name="Tagami M."/>
            <person name="Waki K."/>
            <person name="Watahiki A."/>
            <person name="Okamura-Oho Y."/>
            <person name="Suzuki H."/>
            <person name="Kawai J."/>
            <person name="Hayashizaki Y."/>
        </authorList>
    </citation>
    <scope>NUCLEOTIDE SEQUENCE [LARGE SCALE MRNA]</scope>
    <source>
        <strain>C57BL/6J</strain>
        <tissue>Bone marrow</tissue>
        <tissue>Embryo</tissue>
    </source>
</reference>
<reference key="2">
    <citation type="journal article" date="2004" name="Genome Res.">
        <title>The status, quality, and expansion of the NIH full-length cDNA project: the Mammalian Gene Collection (MGC).</title>
        <authorList>
            <consortium name="The MGC Project Team"/>
        </authorList>
    </citation>
    <scope>NUCLEOTIDE SEQUENCE [LARGE SCALE MRNA]</scope>
    <source>
        <strain>FVB/N</strain>
        <tissue>Mammary tumor</tissue>
    </source>
</reference>
<reference key="3">
    <citation type="journal article" date="2006" name="Mol. Cell. Proteomics">
        <title>Comprehensive identification of phosphorylation sites in postsynaptic density preparations.</title>
        <authorList>
            <person name="Trinidad J.C."/>
            <person name="Specht C.G."/>
            <person name="Thalhammer A."/>
            <person name="Schoepfer R."/>
            <person name="Burlingame A.L."/>
        </authorList>
    </citation>
    <scope>IDENTIFICATION BY MASS SPECTROMETRY [LARGE SCALE ANALYSIS]</scope>
    <source>
        <tissue>Brain</tissue>
    </source>
</reference>
<reference key="4">
    <citation type="journal article" date="2010" name="Cell">
        <title>A tissue-specific atlas of mouse protein phosphorylation and expression.</title>
        <authorList>
            <person name="Huttlin E.L."/>
            <person name="Jedrychowski M.P."/>
            <person name="Elias J.E."/>
            <person name="Goswami T."/>
            <person name="Rad R."/>
            <person name="Beausoleil S.A."/>
            <person name="Villen J."/>
            <person name="Haas W."/>
            <person name="Sowa M.E."/>
            <person name="Gygi S.P."/>
        </authorList>
    </citation>
    <scope>IDENTIFICATION BY MASS SPECTROMETRY [LARGE SCALE ANALYSIS]</scope>
    <source>
        <tissue>Liver</tissue>
    </source>
</reference>
<reference key="5">
    <citation type="journal article" date="2018" name="Genes Dev.">
        <title>NDF, a nucleosome-destabilizing factor that facilitates transcription through nucleosomes.</title>
        <authorList>
            <person name="Fei J."/>
            <person name="Ishii H."/>
            <person name="Hoeksema M.A."/>
            <person name="Meitinger F."/>
            <person name="Kassavetis G.A."/>
            <person name="Glass C.K."/>
            <person name="Ren B."/>
            <person name="Kadonaga J.T."/>
        </authorList>
    </citation>
    <scope>FUNCTION</scope>
</reference>
<reference key="6">
    <citation type="journal article" date="2022" name="Cell">
        <title>Transcription factor protein interactomes reveal genetic determinants in heart disease.</title>
        <authorList>
            <person name="Gonzalez-Teran B."/>
            <person name="Pittman M."/>
            <person name="Felix F."/>
            <person name="Thomas R."/>
            <person name="Richmond-Buccola D."/>
            <person name="Huettenhain R."/>
            <person name="Choudhary K."/>
            <person name="Moroni E."/>
            <person name="Costa M.W."/>
            <person name="Huang Y."/>
            <person name="Padmanabhan A."/>
            <person name="Alexanian M."/>
            <person name="Lee C.Y."/>
            <person name="Maven B.E.J."/>
            <person name="Samse-Knapp K."/>
            <person name="Morton S.U."/>
            <person name="McGregor M."/>
            <person name="Gifford C.A."/>
            <person name="Seidman J.G."/>
            <person name="Seidman C.E."/>
            <person name="Gelb B.D."/>
            <person name="Colombo G."/>
            <person name="Conklin B.R."/>
            <person name="Black B.L."/>
            <person name="Bruneau B.G."/>
            <person name="Krogan N.J."/>
            <person name="Pollard K.S."/>
            <person name="Srivastava D."/>
        </authorList>
    </citation>
    <scope>FUNCTION</scope>
    <scope>MUTAGENESIS OF PRO-489</scope>
</reference>
<keyword id="KW-0158">Chromosome</keyword>
<keyword id="KW-0238">DNA-binding</keyword>
<keyword id="KW-1017">Isopeptide bond</keyword>
<keyword id="KW-0539">Nucleus</keyword>
<keyword id="KW-0597">Phosphoprotein</keyword>
<keyword id="KW-1185">Reference proteome</keyword>
<keyword id="KW-0832">Ubl conjugation</keyword>
<comment type="function">
    <text evidence="1 4 5">Cytokine-like nuclear factor with chromatin gene reader activity involved in chromatin modification and regulation of gene expression (PubMed:29759984). Acts as a nucleosome-destabilizing factor that is recruited to genes during transcriptional activation. Recognizes and binds histone H3 without a preference for specific epigenetic markers and also binds DNA. Interacts with KDM1B and promotes its histone demethylase activity by facilitating the capture of H3 tails, they form a multifunctional enzyme complex that modifies transcribed chromatin and facilitates Pol II transcription through nucleosomes. Stimulates the acetylation of 'Lys-56' of nucleosomal histone H3 (H3K56ac) by EP300 (By similarity). With GATA4, co-binds a defined set of heart development genes and coregulates their expression during cardiomyocyte differentiation (PubMed:35182466). Regulates p38 MAP kinase activity by mediating stress activation of MAPK14/p38alpha and specifically regulating MAPK14 signaling. Indirectly promotes phosphorylation of MAPK14 and activation of ATF2. The phosphorylation of MAPK14 requires upstream activity of MAP2K4 and MAP2K6 (By similarity).</text>
</comment>
<comment type="subunit">
    <text evidence="1">Homotetramere. Interacts with MAPK14. Interacts with KDM1B at nucleosomes; this interaction stimulates H3K4me1 and H3K4me2 demethylation. Binds to mononucleosomes. Interacts with GATA4; the interaction is required for a synergistic activation of GATA4 target genes transcription.</text>
</comment>
<comment type="subcellular location">
    <subcellularLocation>
        <location evidence="1">Nucleus</location>
    </subcellularLocation>
    <subcellularLocation>
        <location evidence="1">Chromosome</location>
    </subcellularLocation>
    <text evidence="1">Found in actively RNAPolII-transcribed gene bodies.</text>
</comment>
<comment type="domain">
    <text evidence="1">The A.T hook DNA-binding domain is required for the interaction with MAPK14.</text>
</comment>
<comment type="domain">
    <text evidence="1">The PWWP domain is a H3 reader and strongly binds DNA.</text>
</comment>
<comment type="domain">
    <text evidence="1">In the dehydrogenase domain, the conserved NAD(P)H-binding sites and sequence similarity to plant dehydrogenases suggest that this protein may have oxidoreductase activity. However, since the active site is not conserved, the dehydrogenase domain seems to serve as a catalytically inert oligomerization module.</text>
</comment>
<comment type="similarity">
    <text evidence="6">Belongs to the HIBADH-related family. NP60 subfamily.</text>
</comment>